<feature type="chain" id="PRO_0000053293" description="Myoglobin">
    <location>
        <begin position="1"/>
        <end position="154"/>
    </location>
</feature>
<feature type="domain" description="Globin" evidence="7">
    <location>
        <begin position="2"/>
        <end position="148"/>
    </location>
</feature>
<feature type="binding site" evidence="5">
    <location>
        <position position="65"/>
    </location>
    <ligand>
        <name>nitrite</name>
        <dbReference type="ChEBI" id="CHEBI:16301"/>
    </ligand>
</feature>
<feature type="binding site" evidence="3 7">
    <location>
        <position position="65"/>
    </location>
    <ligand>
        <name>O2</name>
        <dbReference type="ChEBI" id="CHEBI:15379"/>
    </ligand>
</feature>
<feature type="binding site" description="proximal binding residue" evidence="1">
    <location>
        <position position="94"/>
    </location>
    <ligand>
        <name>heme b</name>
        <dbReference type="ChEBI" id="CHEBI:60344"/>
    </ligand>
    <ligandPart>
        <name>Fe</name>
        <dbReference type="ChEBI" id="CHEBI:18248"/>
    </ligandPart>
</feature>
<feature type="modified residue" description="Phosphoserine" evidence="6">
    <location>
        <position position="4"/>
    </location>
</feature>
<feature type="modified residue" description="Phosphothreonine" evidence="4">
    <location>
        <position position="68"/>
    </location>
</feature>
<name>MYG_ERYPA</name>
<sequence length="154" mass="17148">MGLSDGEWQLVLNVWGKVEADIPSHGQEVLIRLFKGHPETLEKFDKFKHLKSEDEMKASEDLKKHGATVLTALGGILKKKGHHEAEIKPLAQSHATKHKIPVKYLELISESIIQVLQSKHPGDFGADAQGAMNKALELFRNDMAAKYKELGFQG</sequence>
<gene>
    <name type="primary">MB</name>
</gene>
<comment type="function">
    <text evidence="1">Monomeric heme protein which primary function is to store oxygen and facilitate its diffusion within muscle tissues. Reversibly binds oxygen through a pentacoordinated heme iron and enables its timely and efficient release as needed during periods of heightened demand. Depending on the oxidative conditions of tissues and cells, and in addition to its ability to bind oxygen, it also has a nitrite reductase activity whereby it regulates the production of bioactive nitric oxide. Under stress conditions, like hypoxia and anoxia, it also protects cells against reactive oxygen species thanks to its pseudoperoxidase activity.</text>
</comment>
<comment type="catalytic activity">
    <reaction evidence="1">
        <text>Fe(III)-heme b-[protein] + nitric oxide + H2O = Fe(II)-heme b-[protein] + nitrite + 2 H(+)</text>
        <dbReference type="Rhea" id="RHEA:77711"/>
        <dbReference type="Rhea" id="RHEA-COMP:18975"/>
        <dbReference type="Rhea" id="RHEA-COMP:18976"/>
        <dbReference type="ChEBI" id="CHEBI:15377"/>
        <dbReference type="ChEBI" id="CHEBI:15378"/>
        <dbReference type="ChEBI" id="CHEBI:16301"/>
        <dbReference type="ChEBI" id="CHEBI:16480"/>
        <dbReference type="ChEBI" id="CHEBI:55376"/>
        <dbReference type="ChEBI" id="CHEBI:60344"/>
    </reaction>
    <physiologicalReaction direction="right-to-left" evidence="1">
        <dbReference type="Rhea" id="RHEA:77713"/>
    </physiologicalReaction>
</comment>
<comment type="catalytic activity">
    <reaction evidence="1">
        <text>H2O2 + AH2 = A + 2 H2O</text>
        <dbReference type="Rhea" id="RHEA:30275"/>
        <dbReference type="ChEBI" id="CHEBI:13193"/>
        <dbReference type="ChEBI" id="CHEBI:15377"/>
        <dbReference type="ChEBI" id="CHEBI:16240"/>
        <dbReference type="ChEBI" id="CHEBI:17499"/>
    </reaction>
</comment>
<comment type="subunit">
    <text evidence="2">Monomeric.</text>
</comment>
<comment type="subcellular location">
    <subcellularLocation>
        <location evidence="1">Cytoplasm</location>
        <location evidence="1">Sarcoplasm</location>
    </subcellularLocation>
</comment>
<comment type="similarity">
    <text evidence="7">Belongs to the globin family.</text>
</comment>
<accession>P68086</accession>
<accession>P02149</accession>
<proteinExistence type="evidence at protein level"/>
<evidence type="ECO:0000250" key="1">
    <source>
        <dbReference type="UniProtKB" id="P02144"/>
    </source>
</evidence>
<evidence type="ECO:0000250" key="2">
    <source>
        <dbReference type="UniProtKB" id="P02185"/>
    </source>
</evidence>
<evidence type="ECO:0000250" key="3">
    <source>
        <dbReference type="UniProtKB" id="P02189"/>
    </source>
</evidence>
<evidence type="ECO:0000250" key="4">
    <source>
        <dbReference type="UniProtKB" id="P04247"/>
    </source>
</evidence>
<evidence type="ECO:0000250" key="5">
    <source>
        <dbReference type="UniProtKB" id="P68082"/>
    </source>
</evidence>
<evidence type="ECO:0000250" key="6">
    <source>
        <dbReference type="UniProtKB" id="Q9QZ76"/>
    </source>
</evidence>
<evidence type="ECO:0000255" key="7">
    <source>
        <dbReference type="PROSITE-ProRule" id="PRU00238"/>
    </source>
</evidence>
<reference key="1">
    <citation type="journal article" date="1980" name="Biochim. Biophys. Acta">
        <title>The myoglobin of primates X.</title>
        <authorList>
            <person name="Dene H."/>
            <person name="Sazy J."/>
            <person name="Romero-Herrera A.E."/>
        </authorList>
    </citation>
    <scope>PARTIAL PROTEIN SEQUENCE</scope>
</reference>
<protein>
    <recommendedName>
        <fullName>Myoglobin</fullName>
    </recommendedName>
    <alternativeName>
        <fullName evidence="1">Nitrite reductase MB</fullName>
        <ecNumber evidence="1">1.7.-.-</ecNumber>
    </alternativeName>
    <alternativeName>
        <fullName evidence="1">Pseudoperoxidase MB</fullName>
        <ecNumber evidence="1">1.11.1.-</ecNumber>
    </alternativeName>
</protein>
<organism>
    <name type="scientific">Erythrocebus patas</name>
    <name type="common">Red guenon</name>
    <name type="synonym">Cercopithecus patas</name>
    <dbReference type="NCBI Taxonomy" id="9538"/>
    <lineage>
        <taxon>Eukaryota</taxon>
        <taxon>Metazoa</taxon>
        <taxon>Chordata</taxon>
        <taxon>Craniata</taxon>
        <taxon>Vertebrata</taxon>
        <taxon>Euteleostomi</taxon>
        <taxon>Mammalia</taxon>
        <taxon>Eutheria</taxon>
        <taxon>Euarchontoglires</taxon>
        <taxon>Primates</taxon>
        <taxon>Haplorrhini</taxon>
        <taxon>Catarrhini</taxon>
        <taxon>Cercopithecidae</taxon>
        <taxon>Cercopithecinae</taxon>
        <taxon>Erythrocebus</taxon>
    </lineage>
</organism>
<keyword id="KW-0963">Cytoplasm</keyword>
<keyword id="KW-0903">Direct protein sequencing</keyword>
<keyword id="KW-0349">Heme</keyword>
<keyword id="KW-0408">Iron</keyword>
<keyword id="KW-0479">Metal-binding</keyword>
<keyword id="KW-0514">Muscle protein</keyword>
<keyword id="KW-0560">Oxidoreductase</keyword>
<keyword id="KW-0561">Oxygen transport</keyword>
<keyword id="KW-0597">Phosphoprotein</keyword>
<keyword id="KW-0813">Transport</keyword>
<dbReference type="EC" id="1.7.-.-" evidence="1"/>
<dbReference type="EC" id="1.11.1.-" evidence="1"/>
<dbReference type="PIR" id="A90633">
    <property type="entry name" value="MYMQRG"/>
</dbReference>
<dbReference type="SMR" id="P68086"/>
<dbReference type="GO" id="GO:0070062">
    <property type="term" value="C:extracellular exosome"/>
    <property type="evidence" value="ECO:0007669"/>
    <property type="project" value="TreeGrafter"/>
</dbReference>
<dbReference type="GO" id="GO:0016528">
    <property type="term" value="C:sarcoplasm"/>
    <property type="evidence" value="ECO:0000250"/>
    <property type="project" value="UniProtKB"/>
</dbReference>
<dbReference type="GO" id="GO:0020037">
    <property type="term" value="F:heme binding"/>
    <property type="evidence" value="ECO:0007669"/>
    <property type="project" value="InterPro"/>
</dbReference>
<dbReference type="GO" id="GO:0046872">
    <property type="term" value="F:metal ion binding"/>
    <property type="evidence" value="ECO:0007669"/>
    <property type="project" value="UniProtKB-KW"/>
</dbReference>
<dbReference type="GO" id="GO:0098809">
    <property type="term" value="F:nitrite reductase activity"/>
    <property type="evidence" value="ECO:0000250"/>
    <property type="project" value="UniProtKB"/>
</dbReference>
<dbReference type="GO" id="GO:0019825">
    <property type="term" value="F:oxygen binding"/>
    <property type="evidence" value="ECO:0007669"/>
    <property type="project" value="InterPro"/>
</dbReference>
<dbReference type="GO" id="GO:0005344">
    <property type="term" value="F:oxygen carrier activity"/>
    <property type="evidence" value="ECO:0000250"/>
    <property type="project" value="UniProtKB"/>
</dbReference>
<dbReference type="GO" id="GO:0004601">
    <property type="term" value="F:peroxidase activity"/>
    <property type="evidence" value="ECO:0000250"/>
    <property type="project" value="UniProtKB"/>
</dbReference>
<dbReference type="GO" id="GO:0019430">
    <property type="term" value="P:removal of superoxide radicals"/>
    <property type="evidence" value="ECO:0000250"/>
    <property type="project" value="UniProtKB"/>
</dbReference>
<dbReference type="CDD" id="cd08926">
    <property type="entry name" value="Mb"/>
    <property type="match status" value="1"/>
</dbReference>
<dbReference type="Gene3D" id="6.10.140.2100">
    <property type="match status" value="1"/>
</dbReference>
<dbReference type="Gene3D" id="6.10.140.2110">
    <property type="match status" value="1"/>
</dbReference>
<dbReference type="InterPro" id="IPR000971">
    <property type="entry name" value="Globin"/>
</dbReference>
<dbReference type="InterPro" id="IPR009050">
    <property type="entry name" value="Globin-like_sf"/>
</dbReference>
<dbReference type="InterPro" id="IPR002335">
    <property type="entry name" value="Myoglobin"/>
</dbReference>
<dbReference type="PANTHER" id="PTHR47132">
    <property type="entry name" value="MYOGLOBIN"/>
    <property type="match status" value="1"/>
</dbReference>
<dbReference type="PANTHER" id="PTHR47132:SF1">
    <property type="entry name" value="MYOGLOBIN"/>
    <property type="match status" value="1"/>
</dbReference>
<dbReference type="Pfam" id="PF00042">
    <property type="entry name" value="Globin"/>
    <property type="match status" value="1"/>
</dbReference>
<dbReference type="PRINTS" id="PR00613">
    <property type="entry name" value="MYOGLOBIN"/>
</dbReference>
<dbReference type="SUPFAM" id="SSF46458">
    <property type="entry name" value="Globin-like"/>
    <property type="match status" value="1"/>
</dbReference>
<dbReference type="PROSITE" id="PS01033">
    <property type="entry name" value="GLOBIN"/>
    <property type="match status" value="1"/>
</dbReference>